<name>SNX27_RAT</name>
<protein>
    <recommendedName>
        <fullName>Sorting nexin-27</fullName>
    </recommendedName>
    <alternativeName>
        <fullName>MAP-responsive gene protein</fullName>
    </alternativeName>
    <alternativeName>
        <fullName>Methamphetamine-responsive transcript 1 protein</fullName>
    </alternativeName>
    <alternativeName>
        <fullName>PDZ-protein Mrt1</fullName>
    </alternativeName>
</protein>
<dbReference type="EMBL" id="AB010245">
    <property type="protein sequence ID" value="BAC10332.1"/>
    <property type="molecule type" value="mRNA"/>
</dbReference>
<dbReference type="EMBL" id="AB051816">
    <property type="protein sequence ID" value="BAC10333.1"/>
    <property type="molecule type" value="mRNA"/>
</dbReference>
<dbReference type="RefSeq" id="NP_001103621.1">
    <property type="nucleotide sequence ID" value="NM_001110151.1"/>
</dbReference>
<dbReference type="RefSeq" id="NP_690060.2">
    <property type="nucleotide sequence ID" value="NM_152847.2"/>
</dbReference>
<dbReference type="PDB" id="3QDO">
    <property type="method" value="X-ray"/>
    <property type="resolution" value="1.88 A"/>
    <property type="chains" value="A=39-133"/>
</dbReference>
<dbReference type="PDB" id="3QE1">
    <property type="method" value="X-ray"/>
    <property type="resolution" value="1.68 A"/>
    <property type="chains" value="A=39-133"/>
</dbReference>
<dbReference type="PDB" id="3QGL">
    <property type="method" value="X-ray"/>
    <property type="resolution" value="3.31 A"/>
    <property type="chains" value="A/B/C/D/E=39-133"/>
</dbReference>
<dbReference type="PDB" id="4P2A">
    <property type="method" value="X-ray"/>
    <property type="resolution" value="2.70 A"/>
    <property type="chains" value="B=39-133"/>
</dbReference>
<dbReference type="PDB" id="4Z8J">
    <property type="method" value="X-ray"/>
    <property type="resolution" value="0.95 A"/>
    <property type="chains" value="A=39-133"/>
</dbReference>
<dbReference type="PDB" id="5ELQ">
    <property type="method" value="X-ray"/>
    <property type="resolution" value="1.10 A"/>
    <property type="chains" value="A/B=39-133"/>
</dbReference>
<dbReference type="PDB" id="5EM9">
    <property type="method" value="X-ray"/>
    <property type="resolution" value="1.60 A"/>
    <property type="chains" value="A=39-133"/>
</dbReference>
<dbReference type="PDB" id="5EMA">
    <property type="method" value="X-ray"/>
    <property type="resolution" value="1.32 A"/>
    <property type="chains" value="A=39-133"/>
</dbReference>
<dbReference type="PDB" id="5EMB">
    <property type="method" value="X-ray"/>
    <property type="resolution" value="0.85 A"/>
    <property type="chains" value="A=39-133"/>
</dbReference>
<dbReference type="PDBsum" id="3QDO"/>
<dbReference type="PDBsum" id="3QE1"/>
<dbReference type="PDBsum" id="3QGL"/>
<dbReference type="PDBsum" id="4P2A"/>
<dbReference type="PDBsum" id="4Z8J"/>
<dbReference type="PDBsum" id="5ELQ"/>
<dbReference type="PDBsum" id="5EM9"/>
<dbReference type="PDBsum" id="5EMA"/>
<dbReference type="PDBsum" id="5EMB"/>
<dbReference type="SMR" id="Q8K4V4"/>
<dbReference type="BioGRID" id="251741">
    <property type="interactions" value="1"/>
</dbReference>
<dbReference type="FunCoup" id="Q8K4V4">
    <property type="interactions" value="4188"/>
</dbReference>
<dbReference type="IntAct" id="Q8K4V4">
    <property type="interactions" value="20"/>
</dbReference>
<dbReference type="STRING" id="10116.ENSRNOP00000067026"/>
<dbReference type="iPTMnet" id="Q8K4V4"/>
<dbReference type="PhosphoSitePlus" id="Q8K4V4"/>
<dbReference type="jPOST" id="Q8K4V4"/>
<dbReference type="PaxDb" id="10116-ENSRNOP00000067026"/>
<dbReference type="GeneID" id="260323"/>
<dbReference type="KEGG" id="rno:260323"/>
<dbReference type="UCSC" id="RGD:628705">
    <molecule id="Q8K4V4-1"/>
    <property type="organism name" value="rat"/>
</dbReference>
<dbReference type="AGR" id="RGD:628705"/>
<dbReference type="CTD" id="81609"/>
<dbReference type="RGD" id="628705">
    <property type="gene designation" value="Snx27"/>
</dbReference>
<dbReference type="eggNOG" id="KOG3784">
    <property type="taxonomic scope" value="Eukaryota"/>
</dbReference>
<dbReference type="InParanoid" id="Q8K4V4"/>
<dbReference type="OrthoDB" id="4919at9989"/>
<dbReference type="PhylomeDB" id="Q8K4V4"/>
<dbReference type="EvolutionaryTrace" id="Q8K4V4"/>
<dbReference type="PRO" id="PR:Q8K4V4"/>
<dbReference type="Proteomes" id="UP000002494">
    <property type="component" value="Unplaced"/>
</dbReference>
<dbReference type="GO" id="GO:0005829">
    <property type="term" value="C:cytosol"/>
    <property type="evidence" value="ECO:0007669"/>
    <property type="project" value="UniProtKB-SubCell"/>
</dbReference>
<dbReference type="GO" id="GO:0005769">
    <property type="term" value="C:early endosome"/>
    <property type="evidence" value="ECO:0000314"/>
    <property type="project" value="UniProtKB"/>
</dbReference>
<dbReference type="GO" id="GO:0031901">
    <property type="term" value="C:early endosome membrane"/>
    <property type="evidence" value="ECO:0007669"/>
    <property type="project" value="UniProtKB-SubCell"/>
</dbReference>
<dbReference type="GO" id="GO:0005768">
    <property type="term" value="C:endosome"/>
    <property type="evidence" value="ECO:0000266"/>
    <property type="project" value="RGD"/>
</dbReference>
<dbReference type="GO" id="GO:0098978">
    <property type="term" value="C:glutamatergic synapse"/>
    <property type="evidence" value="ECO:0000266"/>
    <property type="project" value="RGD"/>
</dbReference>
<dbReference type="GO" id="GO:0001772">
    <property type="term" value="C:immunological synapse"/>
    <property type="evidence" value="ECO:0000250"/>
    <property type="project" value="UniProtKB"/>
</dbReference>
<dbReference type="GO" id="GO:0098794">
    <property type="term" value="C:postsynapse"/>
    <property type="evidence" value="ECO:0000266"/>
    <property type="project" value="RGD"/>
</dbReference>
<dbReference type="GO" id="GO:0098842">
    <property type="term" value="C:postsynaptic early endosome"/>
    <property type="evidence" value="ECO:0000266"/>
    <property type="project" value="RGD"/>
</dbReference>
<dbReference type="GO" id="GO:0098837">
    <property type="term" value="C:postsynaptic recycling endosome"/>
    <property type="evidence" value="ECO:0000266"/>
    <property type="project" value="RGD"/>
</dbReference>
<dbReference type="GO" id="GO:0030904">
    <property type="term" value="C:retromer complex"/>
    <property type="evidence" value="ECO:0000266"/>
    <property type="project" value="RGD"/>
</dbReference>
<dbReference type="GO" id="GO:0098685">
    <property type="term" value="C:Schaffer collateral - CA1 synapse"/>
    <property type="evidence" value="ECO:0000266"/>
    <property type="project" value="RGD"/>
</dbReference>
<dbReference type="GO" id="GO:0071203">
    <property type="term" value="C:WASH complex"/>
    <property type="evidence" value="ECO:0000266"/>
    <property type="project" value="RGD"/>
</dbReference>
<dbReference type="GO" id="GO:0048306">
    <property type="term" value="F:calcium-dependent protein binding"/>
    <property type="evidence" value="ECO:0000353"/>
    <property type="project" value="RGD"/>
</dbReference>
<dbReference type="GO" id="GO:0035255">
    <property type="term" value="F:ionotropic glutamate receptor binding"/>
    <property type="evidence" value="ECO:0000353"/>
    <property type="project" value="RGD"/>
</dbReference>
<dbReference type="GO" id="GO:0035091">
    <property type="term" value="F:phosphatidylinositol binding"/>
    <property type="evidence" value="ECO:0000318"/>
    <property type="project" value="GO_Central"/>
</dbReference>
<dbReference type="GO" id="GO:0032266">
    <property type="term" value="F:phosphatidylinositol-3-phosphate binding"/>
    <property type="evidence" value="ECO:0000314"/>
    <property type="project" value="UniProtKB"/>
</dbReference>
<dbReference type="GO" id="GO:1990090">
    <property type="term" value="P:cellular response to nerve growth factor stimulus"/>
    <property type="evidence" value="ECO:0000270"/>
    <property type="project" value="RGD"/>
</dbReference>
<dbReference type="GO" id="GO:0032456">
    <property type="term" value="P:endocytic recycling"/>
    <property type="evidence" value="ECO:0000250"/>
    <property type="project" value="UniProtKB"/>
</dbReference>
<dbReference type="GO" id="GO:0016197">
    <property type="term" value="P:endosomal transport"/>
    <property type="evidence" value="ECO:0000315"/>
    <property type="project" value="UniProtKB"/>
</dbReference>
<dbReference type="GO" id="GO:0008333">
    <property type="term" value="P:endosome to lysosome transport"/>
    <property type="evidence" value="ECO:0000266"/>
    <property type="project" value="RGD"/>
</dbReference>
<dbReference type="GO" id="GO:0099638">
    <property type="term" value="P:endosome to plasma membrane protein transport"/>
    <property type="evidence" value="ECO:0000315"/>
    <property type="project" value="RGD"/>
</dbReference>
<dbReference type="GO" id="GO:0061951">
    <property type="term" value="P:establishment of protein localization to plasma membrane"/>
    <property type="evidence" value="ECO:0000315"/>
    <property type="project" value="RGD"/>
</dbReference>
<dbReference type="GO" id="GO:0006886">
    <property type="term" value="P:intracellular protein transport"/>
    <property type="evidence" value="ECO:0000315"/>
    <property type="project" value="UniProtKB"/>
</dbReference>
<dbReference type="GO" id="GO:0007399">
    <property type="term" value="P:nervous system development"/>
    <property type="evidence" value="ECO:0000303"/>
    <property type="project" value="RGD"/>
</dbReference>
<dbReference type="GO" id="GO:0098877">
    <property type="term" value="P:neurotransmitter receptor transport to plasma membrane"/>
    <property type="evidence" value="ECO:0000315"/>
    <property type="project" value="RGD"/>
</dbReference>
<dbReference type="GO" id="GO:1904719">
    <property type="term" value="P:positive regulation of AMPA glutamate receptor clustering"/>
    <property type="evidence" value="ECO:0000315"/>
    <property type="project" value="RGD"/>
</dbReference>
<dbReference type="GO" id="GO:0099072">
    <property type="term" value="P:regulation of postsynaptic membrane neurotransmitter receptor levels"/>
    <property type="evidence" value="ECO:0000266"/>
    <property type="project" value="RGD"/>
</dbReference>
<dbReference type="GO" id="GO:0090128">
    <property type="term" value="P:regulation of synapse maturation"/>
    <property type="evidence" value="ECO:0000266"/>
    <property type="project" value="RGD"/>
</dbReference>
<dbReference type="GO" id="GO:1904313">
    <property type="term" value="P:response to methamphetamine hydrochloride"/>
    <property type="evidence" value="ECO:0000270"/>
    <property type="project" value="RGD"/>
</dbReference>
<dbReference type="GO" id="GO:0007165">
    <property type="term" value="P:signal transduction"/>
    <property type="evidence" value="ECO:0007669"/>
    <property type="project" value="InterPro"/>
</dbReference>
<dbReference type="CDD" id="cd13338">
    <property type="entry name" value="FERM-like_C_SNX27"/>
    <property type="match status" value="1"/>
</dbReference>
<dbReference type="CDD" id="cd01777">
    <property type="entry name" value="FERM_F1_SNX27"/>
    <property type="match status" value="1"/>
</dbReference>
<dbReference type="CDD" id="cd23070">
    <property type="entry name" value="PDZ_SNX27-like"/>
    <property type="match status" value="1"/>
</dbReference>
<dbReference type="CDD" id="cd06886">
    <property type="entry name" value="PX_SNX27"/>
    <property type="match status" value="1"/>
</dbReference>
<dbReference type="FunFam" id="1.20.80.60:FF:000002">
    <property type="entry name" value="sorting nexin-27 isoform X2"/>
    <property type="match status" value="1"/>
</dbReference>
<dbReference type="FunFam" id="2.30.42.10:FF:000061">
    <property type="entry name" value="sorting nexin-27 isoform X2"/>
    <property type="match status" value="1"/>
</dbReference>
<dbReference type="FunFam" id="3.10.20.90:FF:000075">
    <property type="entry name" value="sorting nexin-27 isoform X2"/>
    <property type="match status" value="1"/>
</dbReference>
<dbReference type="FunFam" id="3.30.1520.10:FF:000003">
    <property type="entry name" value="sorting nexin-27 isoform X2"/>
    <property type="match status" value="1"/>
</dbReference>
<dbReference type="Gene3D" id="1.20.80.60">
    <property type="match status" value="1"/>
</dbReference>
<dbReference type="Gene3D" id="2.30.42.10">
    <property type="match status" value="1"/>
</dbReference>
<dbReference type="Gene3D" id="3.10.20.90">
    <property type="entry name" value="Phosphatidylinositol 3-kinase Catalytic Subunit, Chain A, domain 1"/>
    <property type="match status" value="1"/>
</dbReference>
<dbReference type="Gene3D" id="3.30.1520.10">
    <property type="entry name" value="Phox-like domain"/>
    <property type="match status" value="1"/>
</dbReference>
<dbReference type="InterPro" id="IPR001478">
    <property type="entry name" value="PDZ"/>
</dbReference>
<dbReference type="InterPro" id="IPR036034">
    <property type="entry name" value="PDZ_sf"/>
</dbReference>
<dbReference type="InterPro" id="IPR001683">
    <property type="entry name" value="PX_dom"/>
</dbReference>
<dbReference type="InterPro" id="IPR036871">
    <property type="entry name" value="PX_dom_sf"/>
</dbReference>
<dbReference type="InterPro" id="IPR000159">
    <property type="entry name" value="RA_dom"/>
</dbReference>
<dbReference type="InterPro" id="IPR037827">
    <property type="entry name" value="SNX27_FERM-like_dom"/>
</dbReference>
<dbReference type="InterPro" id="IPR037833">
    <property type="entry name" value="SNX27_PX"/>
</dbReference>
<dbReference type="InterPro" id="IPR037835">
    <property type="entry name" value="SNX27_RA"/>
</dbReference>
<dbReference type="InterPro" id="IPR029071">
    <property type="entry name" value="Ubiquitin-like_domsf"/>
</dbReference>
<dbReference type="PANTHER" id="PTHR12431">
    <property type="entry name" value="SORTING NEXIN 17 AND 27"/>
    <property type="match status" value="1"/>
</dbReference>
<dbReference type="PANTHER" id="PTHR12431:SF19">
    <property type="entry name" value="SORTING NEXIN-27"/>
    <property type="match status" value="1"/>
</dbReference>
<dbReference type="Pfam" id="PF00595">
    <property type="entry name" value="PDZ"/>
    <property type="match status" value="1"/>
</dbReference>
<dbReference type="Pfam" id="PF00787">
    <property type="entry name" value="PX"/>
    <property type="match status" value="1"/>
</dbReference>
<dbReference type="Pfam" id="PF00788">
    <property type="entry name" value="RA"/>
    <property type="match status" value="1"/>
</dbReference>
<dbReference type="SMART" id="SM00228">
    <property type="entry name" value="PDZ"/>
    <property type="match status" value="1"/>
</dbReference>
<dbReference type="SMART" id="SM00312">
    <property type="entry name" value="PX"/>
    <property type="match status" value="1"/>
</dbReference>
<dbReference type="SUPFAM" id="SSF50156">
    <property type="entry name" value="PDZ domain-like"/>
    <property type="match status" value="1"/>
</dbReference>
<dbReference type="SUPFAM" id="SSF64268">
    <property type="entry name" value="PX domain"/>
    <property type="match status" value="1"/>
</dbReference>
<dbReference type="SUPFAM" id="SSF54236">
    <property type="entry name" value="Ubiquitin-like"/>
    <property type="match status" value="1"/>
</dbReference>
<dbReference type="PROSITE" id="PS50106">
    <property type="entry name" value="PDZ"/>
    <property type="match status" value="1"/>
</dbReference>
<dbReference type="PROSITE" id="PS50195">
    <property type="entry name" value="PX"/>
    <property type="match status" value="1"/>
</dbReference>
<dbReference type="PROSITE" id="PS50200">
    <property type="entry name" value="RA"/>
    <property type="match status" value="1"/>
</dbReference>
<keyword id="KW-0002">3D-structure</keyword>
<keyword id="KW-0025">Alternative splicing</keyword>
<keyword id="KW-0963">Cytoplasm</keyword>
<keyword id="KW-0967">Endosome</keyword>
<keyword id="KW-0446">Lipid-binding</keyword>
<keyword id="KW-0472">Membrane</keyword>
<keyword id="KW-0597">Phosphoprotein</keyword>
<keyword id="KW-0653">Protein transport</keyword>
<keyword id="KW-1185">Reference proteome</keyword>
<keyword id="KW-0813">Transport</keyword>
<evidence type="ECO:0000250" key="1"/>
<evidence type="ECO:0000250" key="2">
    <source>
        <dbReference type="UniProtKB" id="Q96L92"/>
    </source>
</evidence>
<evidence type="ECO:0000255" key="3">
    <source>
        <dbReference type="PROSITE-ProRule" id="PRU00143"/>
    </source>
</evidence>
<evidence type="ECO:0000255" key="4">
    <source>
        <dbReference type="PROSITE-ProRule" id="PRU00147"/>
    </source>
</evidence>
<evidence type="ECO:0000255" key="5">
    <source>
        <dbReference type="PROSITE-ProRule" id="PRU00166"/>
    </source>
</evidence>
<evidence type="ECO:0000256" key="6">
    <source>
        <dbReference type="SAM" id="MobiDB-lite"/>
    </source>
</evidence>
<evidence type="ECO:0000269" key="7">
    <source>
    </source>
</evidence>
<evidence type="ECO:0000269" key="8">
    <source>
    </source>
</evidence>
<evidence type="ECO:0000269" key="9">
    <source>
    </source>
</evidence>
<evidence type="ECO:0000269" key="10">
    <source>
    </source>
</evidence>
<evidence type="ECO:0000269" key="11">
    <source>
    </source>
</evidence>
<evidence type="ECO:0000303" key="12">
    <source>
    </source>
</evidence>
<evidence type="ECO:0000305" key="13"/>
<evidence type="ECO:0007744" key="14">
    <source>
    </source>
</evidence>
<evidence type="ECO:0007829" key="15">
    <source>
        <dbReference type="PDB" id="5EMB"/>
    </source>
</evidence>
<gene>
    <name type="primary">Snx27</name>
    <name type="synonym">Mrt1</name>
</gene>
<accession>Q8K4V4</accession>
<accession>Q8K4T6</accession>
<sequence length="539" mass="61015">MADEDGEGIHPSTPHRNGGGGGGSGLHCAGNGGGGGGGPRVVRIVKSESGYGFNVRGQVSEGGQLRSINGELYAPLQHVSAVLPGGAADRAGVRKGDRILEVNGVNVEGATHKQVVDLIRAGEKELILTVLSVPPHEADNLDPSDDSLGQSFYDYTEKQAVPISVPTYKHVEQNGEKFVVYNVYMAGRQLCSKRYREFAILHQNLKREFANFTFPRLPGKWPFSLSEQQLDARRRGLEEYLEKVCSIRVIGESDIMQEFLSESDENYNGVSDVELRVALPDGATVTVRVKKNSTTDQVYQAIAAKVGMDSTTVNYFALFEVINHSFVRKLAPNEFPHKLYVQNYTSAVPGTCLTIRKWLFTTEEEVLLNDNDLAVTYFFHQAVDDVKKGYIKAEEKSYQLQKLYEQRKMVMYLNMLRTCEGYNEIIFPHCACDSRRKGHVITAISITHFKLHACTEEGQLENQVIAFEWDEMQRWDTDEEGMAFCFEYARGEKKPRWVKIFTPYFNYMHECFERVFCELKWRKENIFQMARSQQRDVAT</sequence>
<reference key="1">
    <citation type="journal article" date="2003" name="Mol. Psychiatry">
        <title>A developmentally regulated and psychostimulant-inducible novel rat gene mrt1 encoding PDZ-PX proteins isolated in the neocortex.</title>
        <authorList>
            <person name="Kajii Y."/>
            <person name="Muraoka S."/>
            <person name="Hiraoka S."/>
            <person name="Fujiyama K."/>
            <person name="Umino A."/>
            <person name="Nishikawa T."/>
        </authorList>
    </citation>
    <scope>NUCLEOTIDE SEQUENCE [MRNA] (ISOFORMS 1 AND 2)</scope>
    <scope>TISSUE SPECIFICITY</scope>
    <scope>INDUCTION</scope>
    <source>
        <strain>Wistar</strain>
        <tissue>Brain cortex</tissue>
    </source>
</reference>
<reference key="2">
    <citation type="journal article" date="2007" name="Channels">
        <title>Subunit-specific regulation of Kir3 channels by sorting nexin 27.</title>
        <authorList>
            <person name="Nassirpour R."/>
            <person name="Slesinger P.A."/>
        </authorList>
    </citation>
    <scope>FUNCTION</scope>
</reference>
<reference key="3">
    <citation type="journal article" date="2007" name="Mol. Cell. Proteomics">
        <title>Proteomics identification of sorting nexin 27 as a diacylglycerol kinase zeta-associated protein: new diacylglycerol kinase roles in endocytic recycling.</title>
        <authorList>
            <person name="Rincon E."/>
            <person name="Santos T."/>
            <person name="Avila-Flores A."/>
            <person name="Albar J.P."/>
            <person name="Lalioti V."/>
            <person name="Lei C."/>
            <person name="Hong W."/>
            <person name="Merida I."/>
        </authorList>
    </citation>
    <scope>TISSUE SPECIFICITY</scope>
</reference>
<reference key="4">
    <citation type="journal article" date="2007" name="Nat. Neurosci.">
        <title>A unique sorting nexin regulates trafficking of potassium channels via a PDZ domain interaction.</title>
        <authorList>
            <person name="Lunn M.L."/>
            <person name="Nassirpour R."/>
            <person name="Arrabit C."/>
            <person name="Tan J."/>
            <person name="McLeod I."/>
            <person name="Arias C.M."/>
            <person name="Sawchenko P.E."/>
            <person name="Yates J.R. III"/>
            <person name="Slesinger P.A."/>
        </authorList>
    </citation>
    <scope>FUNCTION</scope>
    <scope>SUBCELLULAR LOCATION</scope>
    <scope>INTERACTION WITH KCNJ6 AND KCNJ9</scope>
    <scope>TISSUE SPECIFICITY</scope>
    <scope>PHOSPHATIDYLINOSITOL-3-PHOSPHATE-BINDING</scope>
    <scope>MUTAGENESIS OF LYS-220</scope>
</reference>
<reference key="5">
    <citation type="journal article" date="2012" name="Nat. Commun.">
        <title>Quantitative maps of protein phosphorylation sites across 14 different rat organs and tissues.</title>
        <authorList>
            <person name="Lundby A."/>
            <person name="Secher A."/>
            <person name="Lage K."/>
            <person name="Nordsborg N.B."/>
            <person name="Dmytriyev A."/>
            <person name="Lundby C."/>
            <person name="Olsen J.V."/>
        </authorList>
    </citation>
    <scope>PHOSPHORYLATION [LARGE SCALE ANALYSIS] AT SER-49</scope>
    <scope>IDENTIFICATION BY MASS SPECTROMETRY [LARGE SCALE ANALYSIS]</scope>
</reference>
<reference key="6">
    <citation type="journal article" date="2011" name="Proc. Natl. Acad. Sci. U.S.A.">
        <title>Mechanism underlying selective regulation of G protein-gated inwardly rectifying potassium channels by the psychostimulant-sensitive sorting nexin 27.</title>
        <authorList>
            <person name="Balana B."/>
            <person name="Maslennikov I."/>
            <person name="Kwiatkowski W."/>
            <person name="Stern K.M."/>
            <person name="Bahima L."/>
            <person name="Choe S."/>
            <person name="Slesinger P.A."/>
        </authorList>
    </citation>
    <scope>X-RAY CRYSTALLOGRAPHY (1.68 ANGSTROMS) OF 36-133 IN COMPLEX WITH KCNJ9</scope>
    <scope>SUBCELLULAR LOCATION</scope>
    <scope>TISSUE SPECIFICITY</scope>
    <scope>INTERACTION WITH KCNJ9</scope>
    <scope>MUTAGENESIS OF TYR-51</scope>
</reference>
<proteinExistence type="evidence at protein level"/>
<organism>
    <name type="scientific">Rattus norvegicus</name>
    <name type="common">Rat</name>
    <dbReference type="NCBI Taxonomy" id="10116"/>
    <lineage>
        <taxon>Eukaryota</taxon>
        <taxon>Metazoa</taxon>
        <taxon>Chordata</taxon>
        <taxon>Craniata</taxon>
        <taxon>Vertebrata</taxon>
        <taxon>Euteleostomi</taxon>
        <taxon>Mammalia</taxon>
        <taxon>Eutheria</taxon>
        <taxon>Euarchontoglires</taxon>
        <taxon>Glires</taxon>
        <taxon>Rodentia</taxon>
        <taxon>Myomorpha</taxon>
        <taxon>Muroidea</taxon>
        <taxon>Muridae</taxon>
        <taxon>Murinae</taxon>
        <taxon>Rattus</taxon>
    </lineage>
</organism>
<feature type="chain" id="PRO_0000315358" description="Sorting nexin-27">
    <location>
        <begin position="1"/>
        <end position="539"/>
    </location>
</feature>
<feature type="domain" description="PDZ" evidence="3">
    <location>
        <begin position="41"/>
        <end position="134"/>
    </location>
</feature>
<feature type="domain" description="PX" evidence="4">
    <location>
        <begin position="159"/>
        <end position="267"/>
    </location>
</feature>
<feature type="domain" description="Ras-associating" evidence="5">
    <location>
        <begin position="271"/>
        <end position="360"/>
    </location>
</feature>
<feature type="region of interest" description="Disordered" evidence="6">
    <location>
        <begin position="1"/>
        <end position="40"/>
    </location>
</feature>
<feature type="region of interest" description="FERM-like region F1" evidence="1">
    <location>
        <begin position="271"/>
        <end position="360"/>
    </location>
</feature>
<feature type="region of interest" description="FERM-like region F2" evidence="1">
    <location>
        <begin position="371"/>
        <end position="419"/>
    </location>
</feature>
<feature type="region of interest" description="FERM-like region F3" evidence="1">
    <location>
        <begin position="423"/>
        <end position="523"/>
    </location>
</feature>
<feature type="compositionally biased region" description="Gly residues" evidence="6">
    <location>
        <begin position="17"/>
        <end position="39"/>
    </location>
</feature>
<feature type="modified residue" description="Phosphoserine" evidence="14">
    <location>
        <position position="49"/>
    </location>
</feature>
<feature type="modified residue" description="Phosphoserine" evidence="2">
    <location>
        <position position="60"/>
    </location>
</feature>
<feature type="splice variant" id="VSP_030541" description="In isoform 2." evidence="12">
    <original>NIFQMARSQQRDVAT</original>
    <variation>EY</variation>
    <location>
        <begin position="525"/>
        <end position="539"/>
    </location>
</feature>
<feature type="mutagenesis site" description="Abolishes interaction with KCNJ9." evidence="11">
    <original>Y</original>
    <variation>L</variation>
    <location>
        <position position="51"/>
    </location>
</feature>
<feature type="mutagenesis site" description="Abolishes phosphatidylinositol-3-phosphate-binding and impairs subcellular location." evidence="9">
    <original>K</original>
    <variation>A</variation>
    <location>
        <position position="220"/>
    </location>
</feature>
<feature type="sequence conflict" description="In Ref. 1; BAC10332." evidence="13" ref="1">
    <original>G</original>
    <variation>E</variation>
    <location>
        <position position="236"/>
    </location>
</feature>
<feature type="strand" evidence="15">
    <location>
        <begin position="40"/>
        <end position="45"/>
    </location>
</feature>
<feature type="strand" evidence="15">
    <location>
        <begin position="53"/>
        <end position="62"/>
    </location>
</feature>
<feature type="strand" evidence="15">
    <location>
        <begin position="66"/>
        <end position="68"/>
    </location>
</feature>
<feature type="strand" evidence="15">
    <location>
        <begin position="71"/>
        <end position="74"/>
    </location>
</feature>
<feature type="strand" evidence="15">
    <location>
        <begin position="78"/>
        <end position="82"/>
    </location>
</feature>
<feature type="helix" evidence="15">
    <location>
        <begin position="87"/>
        <end position="90"/>
    </location>
</feature>
<feature type="strand" evidence="15">
    <location>
        <begin position="98"/>
        <end position="102"/>
    </location>
</feature>
<feature type="helix" evidence="15">
    <location>
        <begin position="112"/>
        <end position="119"/>
    </location>
</feature>
<feature type="strand" evidence="15">
    <location>
        <begin position="121"/>
        <end position="131"/>
    </location>
</feature>
<comment type="function">
    <text evidence="9 10">Involved in the retrograde transport from endosome to plasma membrane, a trafficking pathway that promotes the recycling of internalized transmembrane proteins. Following internalization, endocytosed transmembrane proteins are delivered to early endosomes and recycled to the plasma membrane instead of being degraded in lysosomes. SNX27 specifically binds and directs sorting of a subset of transmembrane proteins containing a PDZ-binding motif at the C-terminus: following interaction with target transmembrane proteins, associates with the retromer complex, preventing entry into the lysosomal pathway, and promotes retromer-tubule based plasma membrane recycling. SNX27 also binds with the WASH complex. Interacts with membranes containing phosphatidylinositol-3-phosphate (PtdIns(3P)). May participate in establishment of natural killer cell polarity. Recruits CYTIP to early endosomes.</text>
</comment>
<comment type="subunit">
    <text evidence="2 9 11">Core component of the SNX27-retromer, a multiprotein complex composed of SNX27, the WASH complex and the retromer complex. Interacts (via PDZ domain) with a number of target transmembrane proteins (via PDZ-binding motif): ABCC4, ADRB2, ARHGEF7, GRIA1, GRIA2, GRIN1, GRIN2A GRIN2C, KCNJ6, KCNJ9 and SLC2A1/GLUT1. Interacts (via the FERM-like regions) with the WASH complex. Interacts with SNX1. Interacts with CYTIP. Interacts with DGKZ. Interacts with MCC. Interacts (via PDZ domains) with SLC9A3; directs SLC9A3 membrane insertion from early endosomes to the plasma membrane (By similarity).</text>
</comment>
<comment type="subcellular location">
    <subcellularLocation>
        <location>Early endosome membrane</location>
        <topology>Peripheral membrane protein</topology>
    </subcellularLocation>
    <subcellularLocation>
        <location>Cytoplasm</location>
        <location>Cytosol</location>
    </subcellularLocation>
    <text evidence="1">Localizes to immunological synapse in T-cells. In T-cells, recruited from the cytosol to sorting endosomes by phosphoinositide-3-kinase products (By similarity).</text>
</comment>
<comment type="alternative products">
    <event type="alternative splicing"/>
    <isoform>
        <id>Q8K4V4-1</id>
        <name>1</name>
        <name>Mrt1alpha</name>
        <name>Mrt1a</name>
        <name>SNX27a</name>
        <sequence type="displayed"/>
    </isoform>
    <isoform>
        <id>Q8K4V4-2</id>
        <name>2</name>
        <name>Mrt1beta</name>
        <name>Mrt1b</name>
        <name>SNX27b</name>
        <sequence type="described" ref="VSP_030541"/>
    </isoform>
</comment>
<comment type="tissue specificity">
    <text evidence="7 8 9 11">Isoform 1 is predominantly expressed in the testis, whereas isoform 2 is predominant in various brain regions, including, neocortex, paleocortex, striatum, hippocampus, cerebellum and brain stem. Expressed in cells of hematopoietic origin.</text>
</comment>
<comment type="induction">
    <molecule>Isoform 2</molecule>
    <text evidence="7">Up-regulated by methamphetamine and cocaine in the neocortex, but not by pentobarbital nor by D1 antagonist.</text>
</comment>
<comment type="domain">
    <text evidence="9 11">The PDZ domain mediates binding to a subset of proteins containing a PDZ-binding motif at the C-terminus: the specificity for PDZ-binding motif is provided by the 2 residues located upstream of the canonical PDZ-binding motif (PubMed:17828261, PubMed:21422294). The PDZ domain also mediates binding to the retromer complex via direct interaction with VPS26 (VPS26A or VPS26B).</text>
</comment>
<comment type="domain">
    <text evidence="9">The PX domain mediates binding to phosphatidylinositol 3-phosphate (PtdIns(3P)) and localization to early endosome membranes.</text>
</comment>